<protein>
    <recommendedName>
        <fullName evidence="5">Huntingtin-interacting protein K</fullName>
    </recommendedName>
    <alternativeName>
        <fullName>Huntingtin yeast partner K</fullName>
    </alternativeName>
</protein>
<gene>
    <name evidence="6" type="primary">Hypk</name>
</gene>
<sequence>MATEGDVELELETETSGPERPPEKPRKHDSGAADLERVTDYAEEKEIQSSNLETAMSVIGDRRSREQKAKQEREKELAKVTIKKEDLELIMTEMEISRAAAERSLREHMGNVVEALIALTN</sequence>
<keyword id="KW-0025">Alternative splicing</keyword>
<keyword id="KW-0175">Coiled coil</keyword>
<keyword id="KW-0963">Cytoplasm</keyword>
<keyword id="KW-0539">Nucleus</keyword>
<keyword id="KW-0597">Phosphoprotein</keyword>
<keyword id="KW-1185">Reference proteome</keyword>
<reference key="1">
    <citation type="journal article" date="2005" name="Science">
        <title>The transcriptional landscape of the mammalian genome.</title>
        <authorList>
            <person name="Carninci P."/>
            <person name="Kasukawa T."/>
            <person name="Katayama S."/>
            <person name="Gough J."/>
            <person name="Frith M.C."/>
            <person name="Maeda N."/>
            <person name="Oyama R."/>
            <person name="Ravasi T."/>
            <person name="Lenhard B."/>
            <person name="Wells C."/>
            <person name="Kodzius R."/>
            <person name="Shimokawa K."/>
            <person name="Bajic V.B."/>
            <person name="Brenner S.E."/>
            <person name="Batalov S."/>
            <person name="Forrest A.R."/>
            <person name="Zavolan M."/>
            <person name="Davis M.J."/>
            <person name="Wilming L.G."/>
            <person name="Aidinis V."/>
            <person name="Allen J.E."/>
            <person name="Ambesi-Impiombato A."/>
            <person name="Apweiler R."/>
            <person name="Aturaliya R.N."/>
            <person name="Bailey T.L."/>
            <person name="Bansal M."/>
            <person name="Baxter L."/>
            <person name="Beisel K.W."/>
            <person name="Bersano T."/>
            <person name="Bono H."/>
            <person name="Chalk A.M."/>
            <person name="Chiu K.P."/>
            <person name="Choudhary V."/>
            <person name="Christoffels A."/>
            <person name="Clutterbuck D.R."/>
            <person name="Crowe M.L."/>
            <person name="Dalla E."/>
            <person name="Dalrymple B.P."/>
            <person name="de Bono B."/>
            <person name="Della Gatta G."/>
            <person name="di Bernardo D."/>
            <person name="Down T."/>
            <person name="Engstrom P."/>
            <person name="Fagiolini M."/>
            <person name="Faulkner G."/>
            <person name="Fletcher C.F."/>
            <person name="Fukushima T."/>
            <person name="Furuno M."/>
            <person name="Futaki S."/>
            <person name="Gariboldi M."/>
            <person name="Georgii-Hemming P."/>
            <person name="Gingeras T.R."/>
            <person name="Gojobori T."/>
            <person name="Green R.E."/>
            <person name="Gustincich S."/>
            <person name="Harbers M."/>
            <person name="Hayashi Y."/>
            <person name="Hensch T.K."/>
            <person name="Hirokawa N."/>
            <person name="Hill D."/>
            <person name="Huminiecki L."/>
            <person name="Iacono M."/>
            <person name="Ikeo K."/>
            <person name="Iwama A."/>
            <person name="Ishikawa T."/>
            <person name="Jakt M."/>
            <person name="Kanapin A."/>
            <person name="Katoh M."/>
            <person name="Kawasawa Y."/>
            <person name="Kelso J."/>
            <person name="Kitamura H."/>
            <person name="Kitano H."/>
            <person name="Kollias G."/>
            <person name="Krishnan S.P."/>
            <person name="Kruger A."/>
            <person name="Kummerfeld S.K."/>
            <person name="Kurochkin I.V."/>
            <person name="Lareau L.F."/>
            <person name="Lazarevic D."/>
            <person name="Lipovich L."/>
            <person name="Liu J."/>
            <person name="Liuni S."/>
            <person name="McWilliam S."/>
            <person name="Madan Babu M."/>
            <person name="Madera M."/>
            <person name="Marchionni L."/>
            <person name="Matsuda H."/>
            <person name="Matsuzawa S."/>
            <person name="Miki H."/>
            <person name="Mignone F."/>
            <person name="Miyake S."/>
            <person name="Morris K."/>
            <person name="Mottagui-Tabar S."/>
            <person name="Mulder N."/>
            <person name="Nakano N."/>
            <person name="Nakauchi H."/>
            <person name="Ng P."/>
            <person name="Nilsson R."/>
            <person name="Nishiguchi S."/>
            <person name="Nishikawa S."/>
            <person name="Nori F."/>
            <person name="Ohara O."/>
            <person name="Okazaki Y."/>
            <person name="Orlando V."/>
            <person name="Pang K.C."/>
            <person name="Pavan W.J."/>
            <person name="Pavesi G."/>
            <person name="Pesole G."/>
            <person name="Petrovsky N."/>
            <person name="Piazza S."/>
            <person name="Reed J."/>
            <person name="Reid J.F."/>
            <person name="Ring B.Z."/>
            <person name="Ringwald M."/>
            <person name="Rost B."/>
            <person name="Ruan Y."/>
            <person name="Salzberg S.L."/>
            <person name="Sandelin A."/>
            <person name="Schneider C."/>
            <person name="Schoenbach C."/>
            <person name="Sekiguchi K."/>
            <person name="Semple C.A."/>
            <person name="Seno S."/>
            <person name="Sessa L."/>
            <person name="Sheng Y."/>
            <person name="Shibata Y."/>
            <person name="Shimada H."/>
            <person name="Shimada K."/>
            <person name="Silva D."/>
            <person name="Sinclair B."/>
            <person name="Sperling S."/>
            <person name="Stupka E."/>
            <person name="Sugiura K."/>
            <person name="Sultana R."/>
            <person name="Takenaka Y."/>
            <person name="Taki K."/>
            <person name="Tammoja K."/>
            <person name="Tan S.L."/>
            <person name="Tang S."/>
            <person name="Taylor M.S."/>
            <person name="Tegner J."/>
            <person name="Teichmann S.A."/>
            <person name="Ueda H.R."/>
            <person name="van Nimwegen E."/>
            <person name="Verardo R."/>
            <person name="Wei C.L."/>
            <person name="Yagi K."/>
            <person name="Yamanishi H."/>
            <person name="Zabarovsky E."/>
            <person name="Zhu S."/>
            <person name="Zimmer A."/>
            <person name="Hide W."/>
            <person name="Bult C."/>
            <person name="Grimmond S.M."/>
            <person name="Teasdale R.D."/>
            <person name="Liu E.T."/>
            <person name="Brusic V."/>
            <person name="Quackenbush J."/>
            <person name="Wahlestedt C."/>
            <person name="Mattick J.S."/>
            <person name="Hume D.A."/>
            <person name="Kai C."/>
            <person name="Sasaki D."/>
            <person name="Tomaru Y."/>
            <person name="Fukuda S."/>
            <person name="Kanamori-Katayama M."/>
            <person name="Suzuki M."/>
            <person name="Aoki J."/>
            <person name="Arakawa T."/>
            <person name="Iida J."/>
            <person name="Imamura K."/>
            <person name="Itoh M."/>
            <person name="Kato T."/>
            <person name="Kawaji H."/>
            <person name="Kawagashira N."/>
            <person name="Kawashima T."/>
            <person name="Kojima M."/>
            <person name="Kondo S."/>
            <person name="Konno H."/>
            <person name="Nakano K."/>
            <person name="Ninomiya N."/>
            <person name="Nishio T."/>
            <person name="Okada M."/>
            <person name="Plessy C."/>
            <person name="Shibata K."/>
            <person name="Shiraki T."/>
            <person name="Suzuki S."/>
            <person name="Tagami M."/>
            <person name="Waki K."/>
            <person name="Watahiki A."/>
            <person name="Okamura-Oho Y."/>
            <person name="Suzuki H."/>
            <person name="Kawai J."/>
            <person name="Hayashizaki Y."/>
        </authorList>
    </citation>
    <scope>NUCLEOTIDE SEQUENCE [LARGE SCALE MRNA] (ISOFORM 1)</scope>
    <source>
        <strain>C57BL/6J</strain>
        <tissue>Embryo</tissue>
        <tissue>Heart</tissue>
        <tissue>Tongue</tissue>
    </source>
</reference>
<reference key="2">
    <citation type="journal article" date="2004" name="Genome Res.">
        <title>The status, quality, and expansion of the NIH full-length cDNA project: the Mammalian Gene Collection (MGC).</title>
        <authorList>
            <consortium name="The MGC Project Team"/>
        </authorList>
    </citation>
    <scope>NUCLEOTIDE SEQUENCE [LARGE SCALE MRNA] (ISOFORM 1)</scope>
    <scope>NUCLEOTIDE SEQUENCE [LARGE SCALE MRNA] (ISOFORM 2)</scope>
    <source>
        <strain>FVB/N</strain>
        <strain>FVB/N-3</strain>
        <tissue>Mammary gland</tissue>
        <tissue>Mammary tumor</tissue>
    </source>
</reference>
<reference key="3">
    <citation type="journal article" date="2010" name="Cell">
        <title>A tissue-specific atlas of mouse protein phosphorylation and expression.</title>
        <authorList>
            <person name="Huttlin E.L."/>
            <person name="Jedrychowski M.P."/>
            <person name="Elias J.E."/>
            <person name="Goswami T."/>
            <person name="Rad R."/>
            <person name="Beausoleil S.A."/>
            <person name="Villen J."/>
            <person name="Haas W."/>
            <person name="Sowa M.E."/>
            <person name="Gygi S.P."/>
        </authorList>
    </citation>
    <scope>IDENTIFICATION BY MASS SPECTROMETRY [LARGE SCALE ANALYSIS]</scope>
    <source>
        <tissue>Brain</tissue>
        <tissue>Kidney</tissue>
        <tissue>Liver</tissue>
        <tissue>Lung</tissue>
        <tissue>Pancreas</tissue>
        <tissue>Spleen</tissue>
        <tissue>Testis</tissue>
    </source>
</reference>
<comment type="function">
    <text evidence="1">Component of several N-terminal acetyltransferase complexes (By similarity). Inhibits the N-terminal acetylation activity of the N-terminal acetyltransferase NAA10-NAA15 complex (also called the NatA complex) (By similarity). Has chaperone-like activity preventing polyglutamine (polyQ) aggregation of HTT in neuronal cells probably while associated with the NatA complex (By similarity). May play a role in the NatA complex-mediated N-terminal acetylation of PCNP (By similarity).</text>
</comment>
<comment type="subunit">
    <text evidence="1">Component of the N-terminal acetyltransferase A (NatA)/HYPK complex at least composed of NAA10, NAA15 and HYPK, which has N-terminal acetyltransferase activity (By similarity). Within the complex interacts with NAA10 (By similarity). Within the complex interacts with NAA15 (By similarity). Predominantly interacts with NAA15 in the NAA10-NAA15 complex (also called the NatA complex); the interaction with the NatA complex reduces the acetylation activity of the NatA complex (By similarity). Interacts with HTT (via N-terminus) (By similarity). The NatA complex is required for HYPK stability and for reducing polyQ aggregation of HTT (By similarity). Component of the N-terminal acetyltransferase E (NatE)/HYPK complex at least composed of NAA10, NAA15, NAA50 and HYPK (By similarity). Within the complex interacts with NAA10 and NAA15 (By similarity). Does not interact with NAA50 (By similarity). Interaction with NAA15 reduces the capacity of NAA15 to interact with NAA50 (By similarity). Its capacity to interact with the NatA complex is reduced by NAA50 (By similarity). Does not interact with the N-terminal acetyltransferase B (NatB) complex component NAA25 or the N-terminal acetyltransferase C (NatC) complex component NAA35 (By similarity).</text>
</comment>
<comment type="subcellular location">
    <subcellularLocation>
        <location evidence="1">Nucleus</location>
    </subcellularLocation>
    <subcellularLocation>
        <location evidence="1">Cytoplasm</location>
    </subcellularLocation>
    <text evidence="1">Within the NatA/HYPK complex, may localize to ribosomes.</text>
</comment>
<comment type="alternative products">
    <event type="alternative splicing"/>
    <isoform>
        <id>Q9CR41-1</id>
        <name>1</name>
        <sequence type="displayed"/>
    </isoform>
    <isoform>
        <id>Q9CR41-2</id>
        <name>2</name>
        <sequence type="described" ref="VSP_022833"/>
    </isoform>
</comment>
<comment type="sequence caution" evidence="5">
    <conflict type="erroneous initiation">
        <sequence resource="EMBL-CDS" id="AAH38469"/>
    </conflict>
    <text>Extended N-terminus.</text>
</comment>
<comment type="sequence caution" evidence="5">
    <conflict type="erroneous initiation">
        <sequence resource="EMBL-CDS" id="BAB22870"/>
    </conflict>
    <text>Extended N-terminus.</text>
</comment>
<comment type="sequence caution" evidence="5">
    <conflict type="erroneous initiation">
        <sequence resource="EMBL-CDS" id="BAB26075"/>
    </conflict>
    <text>Extended N-terminus.</text>
</comment>
<comment type="sequence caution" evidence="5">
    <conflict type="erroneous initiation">
        <sequence resource="EMBL-CDS" id="BAE40389"/>
    </conflict>
    <text>Extended N-terminus.</text>
</comment>
<name>HYPK_MOUSE</name>
<feature type="chain" id="PRO_0000274607" description="Huntingtin-interacting protein K">
    <location>
        <begin position="1"/>
        <end position="121"/>
    </location>
</feature>
<feature type="region of interest" description="Disordered" evidence="3">
    <location>
        <begin position="1"/>
        <end position="75"/>
    </location>
</feature>
<feature type="region of interest" description="Required for association with the NAA10-NAA15 complex" evidence="1">
    <location>
        <begin position="52"/>
        <end position="121"/>
    </location>
</feature>
<feature type="coiled-coil region" evidence="2">
    <location>
        <begin position="62"/>
        <end position="107"/>
    </location>
</feature>
<feature type="compositionally biased region" description="Acidic residues" evidence="3">
    <location>
        <begin position="1"/>
        <end position="13"/>
    </location>
</feature>
<feature type="compositionally biased region" description="Basic and acidic residues" evidence="3">
    <location>
        <begin position="20"/>
        <end position="47"/>
    </location>
</feature>
<feature type="compositionally biased region" description="Basic and acidic residues" evidence="3">
    <location>
        <begin position="60"/>
        <end position="75"/>
    </location>
</feature>
<feature type="modified residue" description="Phosphoserine" evidence="1">
    <location>
        <position position="30"/>
    </location>
</feature>
<feature type="splice variant" id="VSP_022833" description="In isoform 2." evidence="4">
    <location>
        <begin position="74"/>
        <end position="121"/>
    </location>
</feature>
<dbReference type="EMBL" id="AK003580">
    <property type="protein sequence ID" value="BAB22870.2"/>
    <property type="status" value="ALT_INIT"/>
    <property type="molecule type" value="mRNA"/>
</dbReference>
<dbReference type="EMBL" id="AK009109">
    <property type="protein sequence ID" value="BAB26075.2"/>
    <property type="status" value="ALT_INIT"/>
    <property type="molecule type" value="mRNA"/>
</dbReference>
<dbReference type="EMBL" id="AK168506">
    <property type="protein sequence ID" value="BAE40389.1"/>
    <property type="status" value="ALT_INIT"/>
    <property type="molecule type" value="mRNA"/>
</dbReference>
<dbReference type="EMBL" id="BC021588">
    <property type="protein sequence ID" value="AAH21588.1"/>
    <property type="molecule type" value="mRNA"/>
</dbReference>
<dbReference type="EMBL" id="BC038469">
    <property type="protein sequence ID" value="AAH38469.1"/>
    <property type="status" value="ALT_INIT"/>
    <property type="molecule type" value="mRNA"/>
</dbReference>
<dbReference type="RefSeq" id="NP_080594.2">
    <property type="nucleotide sequence ID" value="NM_026318.3"/>
</dbReference>
<dbReference type="SMR" id="Q9CR41"/>
<dbReference type="BioGRID" id="212372">
    <property type="interactions" value="6"/>
</dbReference>
<dbReference type="FunCoup" id="Q9CR41">
    <property type="interactions" value="2497"/>
</dbReference>
<dbReference type="STRING" id="10090.ENSMUSP00000106242"/>
<dbReference type="iPTMnet" id="Q9CR41"/>
<dbReference type="PhosphoSitePlus" id="Q9CR41"/>
<dbReference type="jPOST" id="Q9CR41"/>
<dbReference type="PaxDb" id="10090-ENSMUSP00000117946"/>
<dbReference type="PeptideAtlas" id="Q9CR41"/>
<dbReference type="ProteomicsDB" id="273065">
    <molecule id="Q9CR41-1"/>
</dbReference>
<dbReference type="ProteomicsDB" id="273066">
    <molecule id="Q9CR41-2"/>
</dbReference>
<dbReference type="Pumba" id="Q9CR41"/>
<dbReference type="Antibodypedia" id="65071">
    <property type="antibodies" value="7 antibodies from 5 providers"/>
</dbReference>
<dbReference type="GeneID" id="67693"/>
<dbReference type="KEGG" id="mmu:67693"/>
<dbReference type="UCSC" id="uc008lzf.2">
    <molecule id="Q9CR41-1"/>
    <property type="organism name" value="mouse"/>
</dbReference>
<dbReference type="AGR" id="MGI:1914943"/>
<dbReference type="CTD" id="25764"/>
<dbReference type="MGI" id="MGI:1914943">
    <property type="gene designation" value="Hypk"/>
</dbReference>
<dbReference type="VEuPathDB" id="HostDB:ENSMUSG00000027245"/>
<dbReference type="eggNOG" id="KOG3450">
    <property type="taxonomic scope" value="Eukaryota"/>
</dbReference>
<dbReference type="HOGENOM" id="CLU_128817_1_1_1"/>
<dbReference type="InParanoid" id="Q9CR41"/>
<dbReference type="OrthoDB" id="285219at2759"/>
<dbReference type="PhylomeDB" id="Q9CR41"/>
<dbReference type="TreeFam" id="TF325606"/>
<dbReference type="BioGRID-ORCS" id="67693">
    <property type="hits" value="24 hits in 82 CRISPR screens"/>
</dbReference>
<dbReference type="ChiTaRS" id="Hypk">
    <property type="organism name" value="mouse"/>
</dbReference>
<dbReference type="PRO" id="PR:Q9CR41"/>
<dbReference type="Proteomes" id="UP000000589">
    <property type="component" value="Chromosome 2"/>
</dbReference>
<dbReference type="RNAct" id="Q9CR41">
    <property type="molecule type" value="protein"/>
</dbReference>
<dbReference type="Bgee" id="ENSMUSG00000027245">
    <property type="expression patterns" value="Expressed in yolk sac and 165 other cell types or tissues"/>
</dbReference>
<dbReference type="GO" id="GO:0005737">
    <property type="term" value="C:cytoplasm"/>
    <property type="evidence" value="ECO:0000314"/>
    <property type="project" value="MGI"/>
</dbReference>
<dbReference type="GO" id="GO:0005634">
    <property type="term" value="C:nucleus"/>
    <property type="evidence" value="ECO:0007669"/>
    <property type="project" value="UniProtKB-SubCell"/>
</dbReference>
<dbReference type="CDD" id="cd14361">
    <property type="entry name" value="UBA_HYPK"/>
    <property type="match status" value="1"/>
</dbReference>
<dbReference type="FunFam" id="1.10.8.10:FF:000052">
    <property type="entry name" value="Huntingtin-interacting protein K (Predicted)"/>
    <property type="match status" value="1"/>
</dbReference>
<dbReference type="Gene3D" id="1.10.8.10">
    <property type="entry name" value="DNA helicase RuvA subunit, C-terminal domain"/>
    <property type="match status" value="1"/>
</dbReference>
<dbReference type="InterPro" id="IPR052617">
    <property type="entry name" value="Huntingtin-int_K"/>
</dbReference>
<dbReference type="InterPro" id="IPR038922">
    <property type="entry name" value="HYPK_UBA"/>
</dbReference>
<dbReference type="InterPro" id="IPR044034">
    <property type="entry name" value="NAC-like_UBA"/>
</dbReference>
<dbReference type="PANTHER" id="PTHR31184:SF2">
    <property type="entry name" value="HUNTINGTIN-INTERACTING PROTEIN K"/>
    <property type="match status" value="1"/>
</dbReference>
<dbReference type="PANTHER" id="PTHR31184">
    <property type="entry name" value="HUNTINGTIN-INTERACTING PROTEIN K FAMILY MEMBER"/>
    <property type="match status" value="1"/>
</dbReference>
<dbReference type="Pfam" id="PF19026">
    <property type="entry name" value="UBA_HYPK"/>
    <property type="match status" value="1"/>
</dbReference>
<accession>Q9CR41</accession>
<accession>Q3TH09</accession>
<accession>Q8VDK6</accession>
<evidence type="ECO:0000250" key="1">
    <source>
        <dbReference type="UniProtKB" id="Q9NX55"/>
    </source>
</evidence>
<evidence type="ECO:0000255" key="2"/>
<evidence type="ECO:0000256" key="3">
    <source>
        <dbReference type="SAM" id="MobiDB-lite"/>
    </source>
</evidence>
<evidence type="ECO:0000303" key="4">
    <source>
    </source>
</evidence>
<evidence type="ECO:0000305" key="5"/>
<evidence type="ECO:0000312" key="6">
    <source>
        <dbReference type="EMBL" id="BAB22870.2"/>
    </source>
</evidence>
<organism>
    <name type="scientific">Mus musculus</name>
    <name type="common">Mouse</name>
    <dbReference type="NCBI Taxonomy" id="10090"/>
    <lineage>
        <taxon>Eukaryota</taxon>
        <taxon>Metazoa</taxon>
        <taxon>Chordata</taxon>
        <taxon>Craniata</taxon>
        <taxon>Vertebrata</taxon>
        <taxon>Euteleostomi</taxon>
        <taxon>Mammalia</taxon>
        <taxon>Eutheria</taxon>
        <taxon>Euarchontoglires</taxon>
        <taxon>Glires</taxon>
        <taxon>Rodentia</taxon>
        <taxon>Myomorpha</taxon>
        <taxon>Muroidea</taxon>
        <taxon>Muridae</taxon>
        <taxon>Murinae</taxon>
        <taxon>Mus</taxon>
        <taxon>Mus</taxon>
    </lineage>
</organism>
<proteinExistence type="evidence at protein level"/>